<protein>
    <recommendedName>
        <fullName evidence="1">Type III pantothenate kinase 2</fullName>
        <ecNumber evidence="1">2.7.1.33</ecNumber>
    </recommendedName>
    <alternativeName>
        <fullName evidence="1">PanK-III 2</fullName>
    </alternativeName>
    <alternativeName>
        <fullName evidence="1">Pantothenic acid kinase 2</fullName>
    </alternativeName>
</protein>
<gene>
    <name evidence="1" type="primary">coaX2</name>
    <name type="ordered locus">STH3184</name>
</gene>
<reference key="1">
    <citation type="journal article" date="2004" name="Nucleic Acids Res.">
        <title>Genome sequence of Symbiobacterium thermophilum, an uncultivable bacterium that depends on microbial commensalism.</title>
        <authorList>
            <person name="Ueda K."/>
            <person name="Yamashita A."/>
            <person name="Ishikawa J."/>
            <person name="Shimada M."/>
            <person name="Watsuji T."/>
            <person name="Morimura K."/>
            <person name="Ikeda H."/>
            <person name="Hattori M."/>
            <person name="Beppu T."/>
        </authorList>
    </citation>
    <scope>NUCLEOTIDE SEQUENCE [LARGE SCALE GENOMIC DNA]</scope>
    <source>
        <strain>DSM 24528 / JCM 14929 / IAM 14863 / T</strain>
    </source>
</reference>
<proteinExistence type="inferred from homology"/>
<comment type="function">
    <text evidence="1">Catalyzes the phosphorylation of pantothenate (Pan), the first step in CoA biosynthesis.</text>
</comment>
<comment type="catalytic activity">
    <reaction evidence="1">
        <text>(R)-pantothenate + ATP = (R)-4'-phosphopantothenate + ADP + H(+)</text>
        <dbReference type="Rhea" id="RHEA:16373"/>
        <dbReference type="ChEBI" id="CHEBI:10986"/>
        <dbReference type="ChEBI" id="CHEBI:15378"/>
        <dbReference type="ChEBI" id="CHEBI:29032"/>
        <dbReference type="ChEBI" id="CHEBI:30616"/>
        <dbReference type="ChEBI" id="CHEBI:456216"/>
        <dbReference type="EC" id="2.7.1.33"/>
    </reaction>
</comment>
<comment type="cofactor">
    <cofactor evidence="1">
        <name>NH4(+)</name>
        <dbReference type="ChEBI" id="CHEBI:28938"/>
    </cofactor>
    <cofactor evidence="1">
        <name>K(+)</name>
        <dbReference type="ChEBI" id="CHEBI:29103"/>
    </cofactor>
    <text evidence="1">A monovalent cation. Ammonium or potassium.</text>
</comment>
<comment type="pathway">
    <text evidence="1">Cofactor biosynthesis; coenzyme A biosynthesis; CoA from (R)-pantothenate: step 1/5.</text>
</comment>
<comment type="subunit">
    <text evidence="1">Homodimer.</text>
</comment>
<comment type="subcellular location">
    <subcellularLocation>
        <location evidence="1">Cytoplasm</location>
    </subcellularLocation>
</comment>
<comment type="similarity">
    <text evidence="1">Belongs to the type III pantothenate kinase family.</text>
</comment>
<feature type="chain" id="PRO_0000267592" description="Type III pantothenate kinase 2">
    <location>
        <begin position="1"/>
        <end position="264"/>
    </location>
</feature>
<feature type="active site" description="Proton acceptor" evidence="1">
    <location>
        <position position="109"/>
    </location>
</feature>
<feature type="binding site" evidence="1">
    <location>
        <begin position="6"/>
        <end position="13"/>
    </location>
    <ligand>
        <name>ATP</name>
        <dbReference type="ChEBI" id="CHEBI:30616"/>
    </ligand>
</feature>
<feature type="binding site" evidence="1">
    <location>
        <position position="100"/>
    </location>
    <ligand>
        <name>substrate</name>
    </ligand>
</feature>
<feature type="binding site" evidence="1">
    <location>
        <begin position="107"/>
        <end position="110"/>
    </location>
    <ligand>
        <name>substrate</name>
    </ligand>
</feature>
<feature type="binding site" evidence="1">
    <location>
        <position position="129"/>
    </location>
    <ligand>
        <name>K(+)</name>
        <dbReference type="ChEBI" id="CHEBI:29103"/>
    </ligand>
</feature>
<feature type="binding site" evidence="1">
    <location>
        <position position="132"/>
    </location>
    <ligand>
        <name>ATP</name>
        <dbReference type="ChEBI" id="CHEBI:30616"/>
    </ligand>
</feature>
<feature type="binding site" evidence="1">
    <location>
        <position position="184"/>
    </location>
    <ligand>
        <name>substrate</name>
    </ligand>
</feature>
<sequence length="264" mass="28366">MLLTIDVGNTFTVAGVFEGQNLLAEWTVTTDPNRTMDEYGMLFTQLMARAGFSSGQVTAVAIASSVPPLVPTLEWMCQKYFNLKPLVVGPGVRTGMMIRYDNPREVGADRIVGAVAAFDKYGGPLIVVDFSTAIILDAISARGEYLGGVIAPGIVVSADALFQFAAKLPRVELVRPPRALARNTVHAMQSGIIFGFASLVDDLVERMMAELDPEGKGCKVVATGEQAELLAGECATIQYCDPSLTLTGLRIIYERHQAHARGGR</sequence>
<accession>Q67JI4</accession>
<organism>
    <name type="scientific">Symbiobacterium thermophilum (strain DSM 24528 / JCM 14929 / IAM 14863 / T)</name>
    <dbReference type="NCBI Taxonomy" id="292459"/>
    <lineage>
        <taxon>Bacteria</taxon>
        <taxon>Bacillati</taxon>
        <taxon>Bacillota</taxon>
        <taxon>Clostridia</taxon>
        <taxon>Eubacteriales</taxon>
        <taxon>Symbiobacteriaceae</taxon>
        <taxon>Symbiobacterium</taxon>
    </lineage>
</organism>
<dbReference type="EC" id="2.7.1.33" evidence="1"/>
<dbReference type="EMBL" id="AP006840">
    <property type="protein sequence ID" value="BAD42166.1"/>
    <property type="molecule type" value="Genomic_DNA"/>
</dbReference>
<dbReference type="RefSeq" id="WP_011197297.1">
    <property type="nucleotide sequence ID" value="NC_006177.1"/>
</dbReference>
<dbReference type="SMR" id="Q67JI4"/>
<dbReference type="STRING" id="292459.STH3184"/>
<dbReference type="KEGG" id="sth:STH3184"/>
<dbReference type="eggNOG" id="COG1521">
    <property type="taxonomic scope" value="Bacteria"/>
</dbReference>
<dbReference type="HOGENOM" id="CLU_066627_1_0_9"/>
<dbReference type="OrthoDB" id="9804707at2"/>
<dbReference type="UniPathway" id="UPA00241">
    <property type="reaction ID" value="UER00352"/>
</dbReference>
<dbReference type="Proteomes" id="UP000000417">
    <property type="component" value="Chromosome"/>
</dbReference>
<dbReference type="GO" id="GO:0005737">
    <property type="term" value="C:cytoplasm"/>
    <property type="evidence" value="ECO:0007669"/>
    <property type="project" value="UniProtKB-SubCell"/>
</dbReference>
<dbReference type="GO" id="GO:0005524">
    <property type="term" value="F:ATP binding"/>
    <property type="evidence" value="ECO:0007669"/>
    <property type="project" value="UniProtKB-UniRule"/>
</dbReference>
<dbReference type="GO" id="GO:0046872">
    <property type="term" value="F:metal ion binding"/>
    <property type="evidence" value="ECO:0007669"/>
    <property type="project" value="UniProtKB-KW"/>
</dbReference>
<dbReference type="GO" id="GO:0004594">
    <property type="term" value="F:pantothenate kinase activity"/>
    <property type="evidence" value="ECO:0007669"/>
    <property type="project" value="UniProtKB-UniRule"/>
</dbReference>
<dbReference type="GO" id="GO:0015937">
    <property type="term" value="P:coenzyme A biosynthetic process"/>
    <property type="evidence" value="ECO:0007669"/>
    <property type="project" value="UniProtKB-UniRule"/>
</dbReference>
<dbReference type="CDD" id="cd24015">
    <property type="entry name" value="ASKHA_NBD_PanK-III"/>
    <property type="match status" value="1"/>
</dbReference>
<dbReference type="Gene3D" id="3.30.420.40">
    <property type="match status" value="2"/>
</dbReference>
<dbReference type="HAMAP" id="MF_01274">
    <property type="entry name" value="Pantothen_kinase_3"/>
    <property type="match status" value="1"/>
</dbReference>
<dbReference type="InterPro" id="IPR043129">
    <property type="entry name" value="ATPase_NBD"/>
</dbReference>
<dbReference type="InterPro" id="IPR004619">
    <property type="entry name" value="Type_III_PanK"/>
</dbReference>
<dbReference type="NCBIfam" id="TIGR00671">
    <property type="entry name" value="baf"/>
    <property type="match status" value="1"/>
</dbReference>
<dbReference type="NCBIfam" id="NF009855">
    <property type="entry name" value="PRK13321.1"/>
    <property type="match status" value="1"/>
</dbReference>
<dbReference type="PANTHER" id="PTHR34265">
    <property type="entry name" value="TYPE III PANTOTHENATE KINASE"/>
    <property type="match status" value="1"/>
</dbReference>
<dbReference type="PANTHER" id="PTHR34265:SF1">
    <property type="entry name" value="TYPE III PANTOTHENATE KINASE"/>
    <property type="match status" value="1"/>
</dbReference>
<dbReference type="Pfam" id="PF03309">
    <property type="entry name" value="Pan_kinase"/>
    <property type="match status" value="1"/>
</dbReference>
<dbReference type="SUPFAM" id="SSF53067">
    <property type="entry name" value="Actin-like ATPase domain"/>
    <property type="match status" value="2"/>
</dbReference>
<name>COAX2_SYMTH</name>
<evidence type="ECO:0000255" key="1">
    <source>
        <dbReference type="HAMAP-Rule" id="MF_01274"/>
    </source>
</evidence>
<keyword id="KW-0067">ATP-binding</keyword>
<keyword id="KW-0173">Coenzyme A biosynthesis</keyword>
<keyword id="KW-0963">Cytoplasm</keyword>
<keyword id="KW-0418">Kinase</keyword>
<keyword id="KW-0479">Metal-binding</keyword>
<keyword id="KW-0547">Nucleotide-binding</keyword>
<keyword id="KW-0630">Potassium</keyword>
<keyword id="KW-1185">Reference proteome</keyword>
<keyword id="KW-0808">Transferase</keyword>